<feature type="signal peptide" evidence="1">
    <location>
        <begin position="1"/>
        <end position="16"/>
    </location>
</feature>
<feature type="chain" id="PRO_0000020828" description="Balbiani ring A 28 kDa protein">
    <location>
        <begin position="17"/>
        <end position="245"/>
    </location>
</feature>
<feature type="modified residue" description="Phosphoserine" evidence="1">
    <location>
        <position position="33"/>
    </location>
</feature>
<feature type="modified residue" description="Phosphoserine" evidence="1">
    <location>
        <position position="40"/>
    </location>
</feature>
<feature type="modified residue" description="Phosphoserine" evidence="1">
    <location>
        <position position="92"/>
    </location>
</feature>
<feature type="modified residue" description="Phosphoserine" evidence="1">
    <location>
        <position position="93"/>
    </location>
</feature>
<feature type="modified residue" description="Phosphoserine" evidence="1">
    <location>
        <position position="115"/>
    </location>
</feature>
<protein>
    <recommendedName>
        <fullName>Balbiani ring A 28 kDa protein</fullName>
    </recommendedName>
</protein>
<reference key="1">
    <citation type="journal article" date="1986" name="Dokl. Akad. Nauk SSSR">
        <title>Some structural elements of the DNA sequence from the region of Balbiani's ring of chromosome IV in Chironomus thummi.</title>
        <authorList>
            <person name="Bogachev S.S."/>
            <person name="Blinov A.G."/>
            <person name="Blinov V.M."/>
            <person name="Gaidamakova E.K."/>
            <person name="Kolesnikov N.N."/>
            <person name="Kiknadze I.I."/>
            <person name="Shakhmuradov I.A."/>
        </authorList>
    </citation>
    <scope>NUCLEOTIDE SEQUENCE [GENOMIC DNA]</scope>
</reference>
<keyword id="KW-0597">Phosphoprotein</keyword>
<keyword id="KW-0964">Secreted</keyword>
<keyword id="KW-0732">Signal</keyword>
<evidence type="ECO:0000255" key="1"/>
<accession>P28027</accession>
<comment type="function">
    <text>Used by the larvae to construct a supramolecular structure, the larval tube.</text>
</comment>
<comment type="subcellular location">
    <subcellularLocation>
        <location>Secreted</location>
    </subcellularLocation>
</comment>
<comment type="tissue specificity">
    <text>Salivary gland.</text>
</comment>
<sequence length="245" mass="28289">MKSIIKHILFVVLLISIIHDSQCRWFILKNRLSHFINRISELKEQDSREAKLYKSFDIDCGKNFLKVQQNSKMLVNEEEELVFKVASSLKCSSEDAAFKFYFDEIIRPKLKKGLSCFELHLQQQEPDSKLIKNAIITKAEVEKCKKQSPIDDLKEVENGLEDVIGPLDVFSCGAVTSVDDYVLFVTKSVLIKFGESSEAVKKVEMEKLKEYLKDIAFTTAECIFKRFETDPKGTWFIFVGYVARF</sequence>
<name>BRA2_CHITH</name>
<proteinExistence type="evidence at transcript level"/>
<dbReference type="EMBL" id="M54964">
    <property type="protein sequence ID" value="AAA72921.1"/>
    <property type="molecule type" value="Genomic_DNA"/>
</dbReference>
<dbReference type="GO" id="GO:0005576">
    <property type="term" value="C:extracellular region"/>
    <property type="evidence" value="ECO:0007669"/>
    <property type="project" value="UniProtKB-SubCell"/>
</dbReference>
<dbReference type="InterPro" id="IPR035241">
    <property type="entry name" value="DUF5442"/>
</dbReference>
<dbReference type="Pfam" id="PF17514">
    <property type="entry name" value="DUF5442"/>
    <property type="match status" value="1"/>
</dbReference>
<organism>
    <name type="scientific">Chironomus thummi thummi</name>
    <name type="common">Midge</name>
    <dbReference type="NCBI Taxonomy" id="7155"/>
    <lineage>
        <taxon>Eukaryota</taxon>
        <taxon>Metazoa</taxon>
        <taxon>Ecdysozoa</taxon>
        <taxon>Arthropoda</taxon>
        <taxon>Hexapoda</taxon>
        <taxon>Insecta</taxon>
        <taxon>Pterygota</taxon>
        <taxon>Neoptera</taxon>
        <taxon>Endopterygota</taxon>
        <taxon>Diptera</taxon>
        <taxon>Nematocera</taxon>
        <taxon>Chironomoidea</taxon>
        <taxon>Chironomidae</taxon>
        <taxon>Chironominae</taxon>
        <taxon>Chironomus</taxon>
    </lineage>
</organism>